<organism>
    <name type="scientific">Shigella boydii serotype 18 (strain CDC 3083-94 / BS512)</name>
    <dbReference type="NCBI Taxonomy" id="344609"/>
    <lineage>
        <taxon>Bacteria</taxon>
        <taxon>Pseudomonadati</taxon>
        <taxon>Pseudomonadota</taxon>
        <taxon>Gammaproteobacteria</taxon>
        <taxon>Enterobacterales</taxon>
        <taxon>Enterobacteriaceae</taxon>
        <taxon>Shigella</taxon>
    </lineage>
</organism>
<gene>
    <name evidence="1" type="primary">hdfR</name>
    <name type="ordered locus">SbBS512_E4155</name>
</gene>
<reference key="1">
    <citation type="submission" date="2008-05" db="EMBL/GenBank/DDBJ databases">
        <title>Complete sequence of Shigella boydii serotype 18 strain BS512.</title>
        <authorList>
            <person name="Rasko D.A."/>
            <person name="Rosovitz M."/>
            <person name="Maurelli A.T."/>
            <person name="Myers G."/>
            <person name="Seshadri R."/>
            <person name="Cer R."/>
            <person name="Jiang L."/>
            <person name="Ravel J."/>
            <person name="Sebastian Y."/>
        </authorList>
    </citation>
    <scope>NUCLEOTIDE SEQUENCE [LARGE SCALE GENOMIC DNA]</scope>
    <source>
        <strain>CDC 3083-94 / BS512</strain>
    </source>
</reference>
<name>HDFR_SHIB3</name>
<accession>B2TU26</accession>
<comment type="function">
    <text evidence="1">Negatively regulates the transcription of the flagellar master operon flhDC by binding to the upstream region of the operon.</text>
</comment>
<comment type="similarity">
    <text evidence="2">Belongs to the LysR transcriptional regulatory family.</text>
</comment>
<evidence type="ECO:0000255" key="1">
    <source>
        <dbReference type="HAMAP-Rule" id="MF_01233"/>
    </source>
</evidence>
<evidence type="ECO:0000305" key="2"/>
<dbReference type="EMBL" id="CP001063">
    <property type="protein sequence ID" value="ACD08611.1"/>
    <property type="molecule type" value="Genomic_DNA"/>
</dbReference>
<dbReference type="RefSeq" id="WP_000379225.1">
    <property type="nucleotide sequence ID" value="NC_010658.1"/>
</dbReference>
<dbReference type="SMR" id="B2TU26"/>
<dbReference type="STRING" id="344609.SbBS512_E4155"/>
<dbReference type="KEGG" id="sbc:SbBS512_E4155"/>
<dbReference type="HOGENOM" id="CLU_039613_8_2_6"/>
<dbReference type="Proteomes" id="UP000001030">
    <property type="component" value="Chromosome"/>
</dbReference>
<dbReference type="GO" id="GO:0003677">
    <property type="term" value="F:DNA binding"/>
    <property type="evidence" value="ECO:0007669"/>
    <property type="project" value="UniProtKB-KW"/>
</dbReference>
<dbReference type="GO" id="GO:0003700">
    <property type="term" value="F:DNA-binding transcription factor activity"/>
    <property type="evidence" value="ECO:0007669"/>
    <property type="project" value="UniProtKB-UniRule"/>
</dbReference>
<dbReference type="GO" id="GO:0045892">
    <property type="term" value="P:negative regulation of DNA-templated transcription"/>
    <property type="evidence" value="ECO:0007669"/>
    <property type="project" value="UniProtKB-UniRule"/>
</dbReference>
<dbReference type="FunFam" id="1.10.10.10:FF:000001">
    <property type="entry name" value="LysR family transcriptional regulator"/>
    <property type="match status" value="1"/>
</dbReference>
<dbReference type="Gene3D" id="3.40.190.10">
    <property type="entry name" value="Periplasmic binding protein-like II"/>
    <property type="match status" value="2"/>
</dbReference>
<dbReference type="Gene3D" id="1.10.10.10">
    <property type="entry name" value="Winged helix-like DNA-binding domain superfamily/Winged helix DNA-binding domain"/>
    <property type="match status" value="1"/>
</dbReference>
<dbReference type="HAMAP" id="MF_01233">
    <property type="entry name" value="HTH_type_HdfR"/>
    <property type="match status" value="1"/>
</dbReference>
<dbReference type="InterPro" id="IPR050176">
    <property type="entry name" value="LTTR"/>
</dbReference>
<dbReference type="InterPro" id="IPR005119">
    <property type="entry name" value="LysR_subst-bd"/>
</dbReference>
<dbReference type="InterPro" id="IPR020890">
    <property type="entry name" value="Tscrpt_reg_HTH_HdfR"/>
</dbReference>
<dbReference type="InterPro" id="IPR000847">
    <property type="entry name" value="Tscrpt_reg_HTH_LysR"/>
</dbReference>
<dbReference type="InterPro" id="IPR036388">
    <property type="entry name" value="WH-like_DNA-bd_sf"/>
</dbReference>
<dbReference type="InterPro" id="IPR036390">
    <property type="entry name" value="WH_DNA-bd_sf"/>
</dbReference>
<dbReference type="NCBIfam" id="NF002946">
    <property type="entry name" value="PRK03601.1"/>
    <property type="match status" value="1"/>
</dbReference>
<dbReference type="PANTHER" id="PTHR30579:SF8">
    <property type="entry name" value="HTH-TYPE TRANSCRIPTIONAL REGULATOR HDFR"/>
    <property type="match status" value="1"/>
</dbReference>
<dbReference type="PANTHER" id="PTHR30579">
    <property type="entry name" value="TRANSCRIPTIONAL REGULATOR"/>
    <property type="match status" value="1"/>
</dbReference>
<dbReference type="Pfam" id="PF00126">
    <property type="entry name" value="HTH_1"/>
    <property type="match status" value="1"/>
</dbReference>
<dbReference type="Pfam" id="PF03466">
    <property type="entry name" value="LysR_substrate"/>
    <property type="match status" value="1"/>
</dbReference>
<dbReference type="PRINTS" id="PR00039">
    <property type="entry name" value="HTHLYSR"/>
</dbReference>
<dbReference type="SUPFAM" id="SSF53850">
    <property type="entry name" value="Periplasmic binding protein-like II"/>
    <property type="match status" value="1"/>
</dbReference>
<dbReference type="SUPFAM" id="SSF46785">
    <property type="entry name" value="Winged helix' DNA-binding domain"/>
    <property type="match status" value="1"/>
</dbReference>
<dbReference type="PROSITE" id="PS50931">
    <property type="entry name" value="HTH_LYSR"/>
    <property type="match status" value="1"/>
</dbReference>
<feature type="chain" id="PRO_1000139677" description="HTH-type transcriptional regulator HdfR">
    <location>
        <begin position="1"/>
        <end position="279"/>
    </location>
</feature>
<feature type="domain" description="HTH lysR-type" evidence="1">
    <location>
        <begin position="1"/>
        <end position="58"/>
    </location>
</feature>
<feature type="DNA-binding region" description="H-T-H motif" evidence="1">
    <location>
        <begin position="18"/>
        <end position="37"/>
    </location>
</feature>
<keyword id="KW-0238">DNA-binding</keyword>
<keyword id="KW-1185">Reference proteome</keyword>
<keyword id="KW-0678">Repressor</keyword>
<keyword id="KW-0804">Transcription</keyword>
<keyword id="KW-0805">Transcription regulation</keyword>
<sequence length="279" mass="31776">MDTELLKTFLEVSRTRHFGRAAESLYLTQSAVSFRIRQLENQLGVNLFTRHRNNIRLTAAGEKLLPYAEMLMSTWQAARKEVAHTSRHNEFSIGASASLWECMLNQWLGRLYQNQDAHTGLQFEARIAQRQSLVKQLHERQLDLLITTEAPKMDEFSSQLLGYFTLALYTSAPSKLKGDLNYLRLEWGPDFQQHEAGLIGADEVPILTTSSAELAQQQIAMLNGCTWLPVSWARKKGGLHTVVDSTTLSRPLYAIWLQNSDKNALIRDLLKINVLDEVY</sequence>
<protein>
    <recommendedName>
        <fullName evidence="1">HTH-type transcriptional regulator HdfR</fullName>
    </recommendedName>
    <alternativeName>
        <fullName evidence="1">H-NS-dependent flhDC regulator</fullName>
    </alternativeName>
</protein>
<proteinExistence type="inferred from homology"/>